<protein>
    <recommendedName>
        <fullName evidence="1">Glycerol-3-phosphate acyltransferase</fullName>
        <shortName evidence="1">GPAT</shortName>
        <ecNumber evidence="1">2.3.1.15</ecNumber>
    </recommendedName>
</protein>
<gene>
    <name evidence="1" type="primary">plsB</name>
    <name type="ordered locus">YPO0312</name>
    <name type="ordered locus">y0570</name>
    <name type="ordered locus">YP_0468</name>
</gene>
<reference key="1">
    <citation type="journal article" date="2001" name="Nature">
        <title>Genome sequence of Yersinia pestis, the causative agent of plague.</title>
        <authorList>
            <person name="Parkhill J."/>
            <person name="Wren B.W."/>
            <person name="Thomson N.R."/>
            <person name="Titball R.W."/>
            <person name="Holden M.T.G."/>
            <person name="Prentice M.B."/>
            <person name="Sebaihia M."/>
            <person name="James K.D."/>
            <person name="Churcher C.M."/>
            <person name="Mungall K.L."/>
            <person name="Baker S."/>
            <person name="Basham D."/>
            <person name="Bentley S.D."/>
            <person name="Brooks K."/>
            <person name="Cerdeno-Tarraga A.-M."/>
            <person name="Chillingworth T."/>
            <person name="Cronin A."/>
            <person name="Davies R.M."/>
            <person name="Davis P."/>
            <person name="Dougan G."/>
            <person name="Feltwell T."/>
            <person name="Hamlin N."/>
            <person name="Holroyd S."/>
            <person name="Jagels K."/>
            <person name="Karlyshev A.V."/>
            <person name="Leather S."/>
            <person name="Moule S."/>
            <person name="Oyston P.C.F."/>
            <person name="Quail M.A."/>
            <person name="Rutherford K.M."/>
            <person name="Simmonds M."/>
            <person name="Skelton J."/>
            <person name="Stevens K."/>
            <person name="Whitehead S."/>
            <person name="Barrell B.G."/>
        </authorList>
    </citation>
    <scope>NUCLEOTIDE SEQUENCE [LARGE SCALE GENOMIC DNA]</scope>
    <source>
        <strain>CO-92 / Biovar Orientalis</strain>
    </source>
</reference>
<reference key="2">
    <citation type="journal article" date="2002" name="J. Bacteriol.">
        <title>Genome sequence of Yersinia pestis KIM.</title>
        <authorList>
            <person name="Deng W."/>
            <person name="Burland V."/>
            <person name="Plunkett G. III"/>
            <person name="Boutin A."/>
            <person name="Mayhew G.F."/>
            <person name="Liss P."/>
            <person name="Perna N.T."/>
            <person name="Rose D.J."/>
            <person name="Mau B."/>
            <person name="Zhou S."/>
            <person name="Schwartz D.C."/>
            <person name="Fetherston J.D."/>
            <person name="Lindler L.E."/>
            <person name="Brubaker R.R."/>
            <person name="Plano G.V."/>
            <person name="Straley S.C."/>
            <person name="McDonough K.A."/>
            <person name="Nilles M.L."/>
            <person name="Matson J.S."/>
            <person name="Blattner F.R."/>
            <person name="Perry R.D."/>
        </authorList>
    </citation>
    <scope>NUCLEOTIDE SEQUENCE [LARGE SCALE GENOMIC DNA]</scope>
    <source>
        <strain>KIM10+ / Biovar Mediaevalis</strain>
    </source>
</reference>
<reference key="3">
    <citation type="journal article" date="2004" name="DNA Res.">
        <title>Complete genome sequence of Yersinia pestis strain 91001, an isolate avirulent to humans.</title>
        <authorList>
            <person name="Song Y."/>
            <person name="Tong Z."/>
            <person name="Wang J."/>
            <person name="Wang L."/>
            <person name="Guo Z."/>
            <person name="Han Y."/>
            <person name="Zhang J."/>
            <person name="Pei D."/>
            <person name="Zhou D."/>
            <person name="Qin H."/>
            <person name="Pang X."/>
            <person name="Han Y."/>
            <person name="Zhai J."/>
            <person name="Li M."/>
            <person name="Cui B."/>
            <person name="Qi Z."/>
            <person name="Jin L."/>
            <person name="Dai R."/>
            <person name="Chen F."/>
            <person name="Li S."/>
            <person name="Ye C."/>
            <person name="Du Z."/>
            <person name="Lin W."/>
            <person name="Wang J."/>
            <person name="Yu J."/>
            <person name="Yang H."/>
            <person name="Wang J."/>
            <person name="Huang P."/>
            <person name="Yang R."/>
        </authorList>
    </citation>
    <scope>NUCLEOTIDE SEQUENCE [LARGE SCALE GENOMIC DNA]</scope>
    <source>
        <strain>91001 / Biovar Mediaevalis</strain>
    </source>
</reference>
<proteinExistence type="inferred from homology"/>
<dbReference type="EC" id="2.3.1.15" evidence="1"/>
<dbReference type="EMBL" id="AL590842">
    <property type="protein sequence ID" value="CAL18997.1"/>
    <property type="molecule type" value="Genomic_DNA"/>
</dbReference>
<dbReference type="EMBL" id="AE009952">
    <property type="protein sequence ID" value="AAM84158.1"/>
    <property type="status" value="ALT_INIT"/>
    <property type="molecule type" value="Genomic_DNA"/>
</dbReference>
<dbReference type="EMBL" id="AE017042">
    <property type="protein sequence ID" value="AAS60738.1"/>
    <property type="status" value="ALT_INIT"/>
    <property type="molecule type" value="Genomic_DNA"/>
</dbReference>
<dbReference type="PIR" id="AC0039">
    <property type="entry name" value="AC0039"/>
</dbReference>
<dbReference type="RefSeq" id="WP_002214644.1">
    <property type="nucleotide sequence ID" value="NZ_WUCM01000014.1"/>
</dbReference>
<dbReference type="RefSeq" id="YP_002345393.1">
    <property type="nucleotide sequence ID" value="NC_003143.1"/>
</dbReference>
<dbReference type="SMR" id="Q8ZJ18"/>
<dbReference type="IntAct" id="Q8ZJ18">
    <property type="interactions" value="2"/>
</dbReference>
<dbReference type="STRING" id="214092.YPO0312"/>
<dbReference type="PaxDb" id="214092-YPO0312"/>
<dbReference type="EnsemblBacteria" id="AAS60738">
    <property type="protein sequence ID" value="AAS60738"/>
    <property type="gene ID" value="YP_0468"/>
</dbReference>
<dbReference type="GeneID" id="57974292"/>
<dbReference type="KEGG" id="ype:YPO0312"/>
<dbReference type="KEGG" id="ypk:y0570"/>
<dbReference type="KEGG" id="ypm:YP_0468"/>
<dbReference type="PATRIC" id="fig|214092.21.peg.547"/>
<dbReference type="eggNOG" id="COG2937">
    <property type="taxonomic scope" value="Bacteria"/>
</dbReference>
<dbReference type="HOGENOM" id="CLU_015407_0_0_6"/>
<dbReference type="OMA" id="EVIYVPC"/>
<dbReference type="OrthoDB" id="335193at2"/>
<dbReference type="UniPathway" id="UPA00557">
    <property type="reaction ID" value="UER00612"/>
</dbReference>
<dbReference type="Proteomes" id="UP000000815">
    <property type="component" value="Chromosome"/>
</dbReference>
<dbReference type="Proteomes" id="UP000001019">
    <property type="component" value="Chromosome"/>
</dbReference>
<dbReference type="Proteomes" id="UP000002490">
    <property type="component" value="Chromosome"/>
</dbReference>
<dbReference type="GO" id="GO:0005886">
    <property type="term" value="C:plasma membrane"/>
    <property type="evidence" value="ECO:0007669"/>
    <property type="project" value="UniProtKB-SubCell"/>
</dbReference>
<dbReference type="GO" id="GO:0004366">
    <property type="term" value="F:glycerol-3-phosphate O-acyltransferase activity"/>
    <property type="evidence" value="ECO:0000318"/>
    <property type="project" value="GO_Central"/>
</dbReference>
<dbReference type="GO" id="GO:0016024">
    <property type="term" value="P:CDP-diacylglycerol biosynthetic process"/>
    <property type="evidence" value="ECO:0007669"/>
    <property type="project" value="UniProtKB-UniRule"/>
</dbReference>
<dbReference type="GO" id="GO:0006631">
    <property type="term" value="P:fatty acid metabolic process"/>
    <property type="evidence" value="ECO:0000318"/>
    <property type="project" value="GO_Central"/>
</dbReference>
<dbReference type="GO" id="GO:0008654">
    <property type="term" value="P:phospholipid biosynthetic process"/>
    <property type="evidence" value="ECO:0000318"/>
    <property type="project" value="GO_Central"/>
</dbReference>
<dbReference type="CDD" id="cd07993">
    <property type="entry name" value="LPLAT_DHAPAT-like"/>
    <property type="match status" value="1"/>
</dbReference>
<dbReference type="HAMAP" id="MF_00393">
    <property type="entry name" value="Glyc3P_acyltrans"/>
    <property type="match status" value="1"/>
</dbReference>
<dbReference type="InterPro" id="IPR022284">
    <property type="entry name" value="GPAT/DHAPAT"/>
</dbReference>
<dbReference type="InterPro" id="IPR045520">
    <property type="entry name" value="GPAT/DHAPAT_C"/>
</dbReference>
<dbReference type="InterPro" id="IPR041728">
    <property type="entry name" value="GPAT/DHAPAT_LPLAT"/>
</dbReference>
<dbReference type="InterPro" id="IPR028354">
    <property type="entry name" value="GPAT_PlsB"/>
</dbReference>
<dbReference type="InterPro" id="IPR002123">
    <property type="entry name" value="Plipid/glycerol_acylTrfase"/>
</dbReference>
<dbReference type="NCBIfam" id="TIGR03703">
    <property type="entry name" value="plsB"/>
    <property type="match status" value="1"/>
</dbReference>
<dbReference type="NCBIfam" id="NF003441">
    <property type="entry name" value="PRK04974.1"/>
    <property type="match status" value="1"/>
</dbReference>
<dbReference type="PANTHER" id="PTHR12563:SF17">
    <property type="entry name" value="DIHYDROXYACETONE PHOSPHATE ACYLTRANSFERASE"/>
    <property type="match status" value="1"/>
</dbReference>
<dbReference type="PANTHER" id="PTHR12563">
    <property type="entry name" value="GLYCEROL-3-PHOSPHATE ACYLTRANSFERASE"/>
    <property type="match status" value="1"/>
</dbReference>
<dbReference type="Pfam" id="PF01553">
    <property type="entry name" value="Acyltransferase"/>
    <property type="match status" value="1"/>
</dbReference>
<dbReference type="Pfam" id="PF19277">
    <property type="entry name" value="GPAT_C"/>
    <property type="match status" value="1"/>
</dbReference>
<dbReference type="PIRSF" id="PIRSF500064">
    <property type="entry name" value="GPAT"/>
    <property type="match status" value="1"/>
</dbReference>
<dbReference type="PIRSF" id="PIRSF000437">
    <property type="entry name" value="GPAT_DHAPAT"/>
    <property type="match status" value="1"/>
</dbReference>
<dbReference type="SMART" id="SM00563">
    <property type="entry name" value="PlsC"/>
    <property type="match status" value="1"/>
</dbReference>
<dbReference type="SUPFAM" id="SSF69593">
    <property type="entry name" value="Glycerol-3-phosphate (1)-acyltransferase"/>
    <property type="match status" value="1"/>
</dbReference>
<accession>Q8ZJ18</accession>
<accession>Q0WJZ5</accession>
<keyword id="KW-0012">Acyltransferase</keyword>
<keyword id="KW-0997">Cell inner membrane</keyword>
<keyword id="KW-1003">Cell membrane</keyword>
<keyword id="KW-0444">Lipid biosynthesis</keyword>
<keyword id="KW-0443">Lipid metabolism</keyword>
<keyword id="KW-0472">Membrane</keyword>
<keyword id="KW-0594">Phospholipid biosynthesis</keyword>
<keyword id="KW-1208">Phospholipid metabolism</keyword>
<keyword id="KW-1185">Reference proteome</keyword>
<keyword id="KW-0808">Transferase</keyword>
<comment type="catalytic activity">
    <reaction evidence="1">
        <text>sn-glycerol 3-phosphate + an acyl-CoA = a 1-acyl-sn-glycero-3-phosphate + CoA</text>
        <dbReference type="Rhea" id="RHEA:15325"/>
        <dbReference type="ChEBI" id="CHEBI:57287"/>
        <dbReference type="ChEBI" id="CHEBI:57597"/>
        <dbReference type="ChEBI" id="CHEBI:57970"/>
        <dbReference type="ChEBI" id="CHEBI:58342"/>
        <dbReference type="EC" id="2.3.1.15"/>
    </reaction>
</comment>
<comment type="pathway">
    <text evidence="1">Phospholipid metabolism; CDP-diacylglycerol biosynthesis; CDP-diacylglycerol from sn-glycerol 3-phosphate: step 1/3.</text>
</comment>
<comment type="subcellular location">
    <subcellularLocation>
        <location evidence="1">Cell inner membrane</location>
        <topology evidence="1">Peripheral membrane protein</topology>
        <orientation evidence="1">Cytoplasmic side</orientation>
    </subcellularLocation>
</comment>
<comment type="domain">
    <text evidence="1">The HXXXXD motif is essential for acyltransferase activity and may constitute the binding site for the phosphate moiety of the glycerol-3-phosphate.</text>
</comment>
<comment type="similarity">
    <text evidence="1">Belongs to the GPAT/DAPAT family.</text>
</comment>
<comment type="sequence caution" evidence="3">
    <conflict type="erroneous initiation">
        <sequence resource="EMBL-CDS" id="AAM84158"/>
    </conflict>
</comment>
<comment type="sequence caution" evidence="3">
    <conflict type="erroneous initiation">
        <sequence resource="EMBL-CDS" id="AAS60738"/>
    </conflict>
</comment>
<organism>
    <name type="scientific">Yersinia pestis</name>
    <dbReference type="NCBI Taxonomy" id="632"/>
    <lineage>
        <taxon>Bacteria</taxon>
        <taxon>Pseudomonadati</taxon>
        <taxon>Pseudomonadota</taxon>
        <taxon>Gammaproteobacteria</taxon>
        <taxon>Enterobacterales</taxon>
        <taxon>Yersiniaceae</taxon>
        <taxon>Yersinia</taxon>
    </lineage>
</organism>
<sequence>MSGWRKIYYKLLNLPLKLLVKSKVIPADPVSELGLDPSRPILYVLPYNSKADLLTLRAQCLAQDLPDPLIPLEIDGVQLPSHVFIENGPRVFRYYVPKQESVKLFHDYLDLHRNNPALDIQMLPVSVMFGRSPGREGHGTPHLRVLNGVQKFFAVLWLGRDSFVRFSTTVSLRRMASEHGTDKTIAHKLARVARMHFSRQRLAAVGPSLPARQDLFKKLLASKAIEKAVADEARSKKISHEKAQQNAITLMEEIAANFSYEAVRLSDRVLSWTWNRLYQGINVHNAERVRQLAQDGHEIVYVPCHRSHMDYLLLSYVLYHQGLVPPHIAAGINLNFWPAGPIFRRLGAFFIRRTFKGNKLYSTVFREYLGELFTRGYSVEYFVEGGRSRTGRLLEPKTGTLSMTIQAMLRGGTRPITLVPIYIGYEHVMEVGTYAKELRGAIKEKENLLQMLRGLRKLRNLGQGYVNFGEPLPLTTYLNTHVPQWRDAIDPIEAQRPSWLTPAVNDLANQIMVRINNAAAANAMNLCSTALLASRQRSLTREQLLEQLDCYLQLMRNAPYAKDTTVPDKTPEELLNHALNMNKFEVEKDTIGDIIILPREQAVLMTYYRNNIQHLLILPSLIASMVMYHRRITRTELLHKISMIYPMLKAELFLHYSKEQLPETLDTLIDELARQQLICDKGSELVLNPARIRPLQLLAAGVRETLQRYAITLSLLSATPSINRGALEKESRIMAQRLSVLHGINAPEFFDKAVFSTLVATLREEGYISDSGDAIQEHTLEVYNMLSALMTPEVKLTIESVSMPAETSNQPEAPETPEPEGKTES</sequence>
<feature type="chain" id="PRO_0000195243" description="Glycerol-3-phosphate acyltransferase">
    <location>
        <begin position="1"/>
        <end position="825"/>
    </location>
</feature>
<feature type="region of interest" description="Disordered" evidence="2">
    <location>
        <begin position="803"/>
        <end position="825"/>
    </location>
</feature>
<feature type="short sequence motif" description="HXXXXD motif">
    <location>
        <begin position="305"/>
        <end position="310"/>
    </location>
</feature>
<name>PLSB_YERPE</name>
<evidence type="ECO:0000255" key="1">
    <source>
        <dbReference type="HAMAP-Rule" id="MF_00393"/>
    </source>
</evidence>
<evidence type="ECO:0000256" key="2">
    <source>
        <dbReference type="SAM" id="MobiDB-lite"/>
    </source>
</evidence>
<evidence type="ECO:0000305" key="3"/>